<dbReference type="EMBL" id="AY840978">
    <property type="protein sequence ID" value="AAX47597.1"/>
    <property type="molecule type" value="Genomic_RNA"/>
</dbReference>
<dbReference type="RefSeq" id="YP_238529.1">
    <property type="nucleotide sequence ID" value="NC_007020.1"/>
</dbReference>
<dbReference type="GeneID" id="3416611"/>
<dbReference type="KEGG" id="vg:3416611"/>
<dbReference type="Proteomes" id="UP000029771">
    <property type="component" value="Segment"/>
</dbReference>
<dbReference type="GO" id="GO:0030430">
    <property type="term" value="C:host cell cytoplasm"/>
    <property type="evidence" value="ECO:0007669"/>
    <property type="project" value="UniProtKB-SubCell"/>
</dbReference>
<dbReference type="GO" id="GO:0044423">
    <property type="term" value="C:virion component"/>
    <property type="evidence" value="ECO:0007669"/>
    <property type="project" value="UniProtKB-KW"/>
</dbReference>
<dbReference type="GO" id="GO:0019083">
    <property type="term" value="P:viral transcription"/>
    <property type="evidence" value="ECO:0007669"/>
    <property type="project" value="UniProtKB-KW"/>
</dbReference>
<reference key="1">
    <citation type="journal article" date="2005" name="J. Virol.">
        <title>Characterization of the Tupaia rhabdovirus genome reveals a long open reading frame overlapping with P and a novel gene encoding a small hydrophobic protein.</title>
        <authorList>
            <person name="Springfeld C."/>
            <person name="Darai G."/>
            <person name="Cattaneo R."/>
        </authorList>
    </citation>
    <scope>NUCLEOTIDE SEQUENCE [GENOMIC RNA]</scope>
</reference>
<organism>
    <name type="scientific">Tupaia virus (isolate Tupaia/Thailand/-/1986)</name>
    <name type="common">TUPV</name>
    <dbReference type="NCBI Taxonomy" id="1560034"/>
    <lineage>
        <taxon>Viruses</taxon>
        <taxon>Riboviria</taxon>
        <taxon>Orthornavirae</taxon>
        <taxon>Negarnaviricota</taxon>
        <taxon>Haploviricotina</taxon>
        <taxon>Monjiviricetes</taxon>
        <taxon>Mononegavirales</taxon>
        <taxon>Rhabdoviridae</taxon>
        <taxon>Alpharhabdovirinae</taxon>
        <taxon>Tupavirus</taxon>
        <taxon>Tupavirus tupaia</taxon>
    </lineage>
</organism>
<comment type="function">
    <text evidence="1">Essential component of the RNA polymerase transcription and replication complex. Binds the viral ribonucleocapsid and positions the L polymerase on the template. May act as a chaperone for newly synthesized free N protein, so-called N(0). Plays a role in virion assembly.</text>
</comment>
<comment type="subunit">
    <text evidence="1">Homotrimer. This trimer is stabilized by binding to the L protein. Binds N(0), and N in ribonucleocapsid.</text>
</comment>
<comment type="subcellular location">
    <subcellularLocation>
        <location evidence="1">Virion</location>
    </subcellularLocation>
    <subcellularLocation>
        <location evidence="1">Host cytoplasm</location>
    </subcellularLocation>
</comment>
<comment type="alternative products">
    <event type="alternative initiation"/>
    <isoform>
        <id>Q4VKV7-1</id>
        <name>Phosphoprotein</name>
        <sequence type="displayed"/>
    </isoform>
    <isoform>
        <id>Q4VKV6-1</id>
        <name>Protein C</name>
        <sequence type="external"/>
    </isoform>
</comment>
<comment type="PTM">
    <text evidence="1">Phosphorylated by host kinases. Phosphorylation play an important role in facilitating trimerization and possibly P-L complex formation.</text>
</comment>
<protein>
    <recommendedName>
        <fullName>Phosphoprotein</fullName>
        <shortName>P protein</shortName>
    </recommendedName>
</protein>
<accession>Q4VKV7</accession>
<keyword id="KW-0024">Alternative initiation</keyword>
<keyword id="KW-0143">Chaperone</keyword>
<keyword id="KW-1035">Host cytoplasm</keyword>
<keyword id="KW-0597">Phosphoprotein</keyword>
<keyword id="KW-1185">Reference proteome</keyword>
<keyword id="KW-0693">Viral RNA replication</keyword>
<keyword id="KW-1195">Viral transcription</keyword>
<keyword id="KW-0946">Virion</keyword>
<feature type="chain" id="PRO_0000432069" description="Phosphoprotein">
    <location>
        <begin position="1"/>
        <end position="337"/>
    </location>
</feature>
<feature type="region of interest" description="Disordered" evidence="2">
    <location>
        <begin position="77"/>
        <end position="110"/>
    </location>
</feature>
<feature type="region of interest" description="Disordered" evidence="2">
    <location>
        <begin position="136"/>
        <end position="194"/>
    </location>
</feature>
<feature type="compositionally biased region" description="Basic and acidic residues" evidence="2">
    <location>
        <begin position="90"/>
        <end position="99"/>
    </location>
</feature>
<feature type="compositionally biased region" description="Basic and acidic residues" evidence="2">
    <location>
        <begin position="172"/>
        <end position="182"/>
    </location>
</feature>
<gene>
    <name type="primary">P</name>
</gene>
<proteinExistence type="inferred from homology"/>
<evidence type="ECO:0000250" key="1">
    <source>
        <dbReference type="UniProtKB" id="P03520"/>
    </source>
</evidence>
<evidence type="ECO:0000256" key="2">
    <source>
        <dbReference type="SAM" id="MobiDB-lite"/>
    </source>
</evidence>
<sequence>MTDPKKISRVALKGYDLTKVSRALEECEDQPGVRVGGVQIVSGGEAEAPAHLEDNRQGAIGDNFDVFSRDSKNVQIVTEHEDSSDEEYEEARSYGDDSGHQPNRAAVPFADDEYGDFKRARERLPQLFHEGWGFGSQQANEESSEGLQQQSGECGSGGGSSNAGGKDEDDLQEKTGHEKEKSVIVPPKESGSVSGYHGSCDIPFNMEEFLASPATTQRRQLLELCQLIADRSNEELIFFPWGFNLVKRKVHRVEPQQPVAVSHRFTWEDFQLKLKAGFTLIHKKTKAPVVLNSSSYNLGSVPEGGISLSPDDTELSVLIKCLRYLGLYKFLATQIEF</sequence>
<organismHost>
    <name type="scientific">Tupaia</name>
    <dbReference type="NCBI Taxonomy" id="9394"/>
</organismHost>
<name>PHOSP_TUPVT</name>